<evidence type="ECO:0000256" key="1">
    <source>
        <dbReference type="SAM" id="MobiDB-lite"/>
    </source>
</evidence>
<evidence type="ECO:0000305" key="2"/>
<name>F90AA_HUMAN</name>
<sequence>MMARRDPKSWAKRLVRAQTLQKQRRAPVGPRAPPPDEEDPRLKCKNCGAFGHTARSTTCPMKCWKAALVPATLGKKEGKENLKPWKPRGEANPGPLNKDKGEKEERPRQQDPQRKALLHMFSGKPPEKPLPNGKGSTESSEHLRVASGPMPVHTTSKRPRVDPVLADRSATEMSGRGSVLASLSPLRKASLSSSSSLGPKERQTGAAADIPQPAFRHQGPEPLLVVKPTHSSPEGGCREVPQAASKTHGLLQAARPQAQDKRPAVTSQPCPPAATHSLGLGSNLSFGPGAKRPAQAPIQACLNFPKKPRLGPFQIPESAIQGGELGAPENLQPPPAATELGPSTSPQMGRRTPAQVPSVDWQPPHSTPCLPTAQACTMSHHPAAGHDGAQPLRVLFRRLENGRWSSSLLAAPSFHSPEKPGAFLAQSPHVSEKSEAPCVRVPPSVLYEDLQVSSSSEDSDSDLE</sequence>
<protein>
    <recommendedName>
        <fullName>Protein FAM90A10</fullName>
    </recommendedName>
</protein>
<organism>
    <name type="scientific">Homo sapiens</name>
    <name type="common">Human</name>
    <dbReference type="NCBI Taxonomy" id="9606"/>
    <lineage>
        <taxon>Eukaryota</taxon>
        <taxon>Metazoa</taxon>
        <taxon>Chordata</taxon>
        <taxon>Craniata</taxon>
        <taxon>Vertebrata</taxon>
        <taxon>Euteleostomi</taxon>
        <taxon>Mammalia</taxon>
        <taxon>Eutheria</taxon>
        <taxon>Euarchontoglires</taxon>
        <taxon>Primates</taxon>
        <taxon>Haplorrhini</taxon>
        <taxon>Catarrhini</taxon>
        <taxon>Hominidae</taxon>
        <taxon>Homo</taxon>
    </lineage>
</organism>
<reference key="1">
    <citation type="journal article" date="2006" name="Nature">
        <title>DNA sequence and analysis of human chromosome 8.</title>
        <authorList>
            <person name="Nusbaum C."/>
            <person name="Mikkelsen T.S."/>
            <person name="Zody M.C."/>
            <person name="Asakawa S."/>
            <person name="Taudien S."/>
            <person name="Garber M."/>
            <person name="Kodira C.D."/>
            <person name="Schueler M.G."/>
            <person name="Shimizu A."/>
            <person name="Whittaker C.A."/>
            <person name="Chang J.L."/>
            <person name="Cuomo C.A."/>
            <person name="Dewar K."/>
            <person name="FitzGerald M.G."/>
            <person name="Yang X."/>
            <person name="Allen N.R."/>
            <person name="Anderson S."/>
            <person name="Asakawa T."/>
            <person name="Blechschmidt K."/>
            <person name="Bloom T."/>
            <person name="Borowsky M.L."/>
            <person name="Butler J."/>
            <person name="Cook A."/>
            <person name="Corum B."/>
            <person name="DeArellano K."/>
            <person name="DeCaprio D."/>
            <person name="Dooley K.T."/>
            <person name="Dorris L. III"/>
            <person name="Engels R."/>
            <person name="Gloeckner G."/>
            <person name="Hafez N."/>
            <person name="Hagopian D.S."/>
            <person name="Hall J.L."/>
            <person name="Ishikawa S.K."/>
            <person name="Jaffe D.B."/>
            <person name="Kamat A."/>
            <person name="Kudoh J."/>
            <person name="Lehmann R."/>
            <person name="Lokitsang T."/>
            <person name="Macdonald P."/>
            <person name="Major J.E."/>
            <person name="Matthews C.D."/>
            <person name="Mauceli E."/>
            <person name="Menzel U."/>
            <person name="Mihalev A.H."/>
            <person name="Minoshima S."/>
            <person name="Murayama Y."/>
            <person name="Naylor J.W."/>
            <person name="Nicol R."/>
            <person name="Nguyen C."/>
            <person name="O'Leary S.B."/>
            <person name="O'Neill K."/>
            <person name="Parker S.C.J."/>
            <person name="Polley A."/>
            <person name="Raymond C.K."/>
            <person name="Reichwald K."/>
            <person name="Rodriguez J."/>
            <person name="Sasaki T."/>
            <person name="Schilhabel M."/>
            <person name="Siddiqui R."/>
            <person name="Smith C.L."/>
            <person name="Sneddon T.P."/>
            <person name="Talamas J.A."/>
            <person name="Tenzin P."/>
            <person name="Topham K."/>
            <person name="Venkataraman V."/>
            <person name="Wen G."/>
            <person name="Yamazaki S."/>
            <person name="Young S.K."/>
            <person name="Zeng Q."/>
            <person name="Zimmer A.R."/>
            <person name="Rosenthal A."/>
            <person name="Birren B.W."/>
            <person name="Platzer M."/>
            <person name="Shimizu N."/>
            <person name="Lander E.S."/>
        </authorList>
    </citation>
    <scope>NUCLEOTIDE SEQUENCE [LARGE SCALE GENOMIC DNA]</scope>
</reference>
<accession>A6NDY2</accession>
<comment type="similarity">
    <text evidence="2">Belongs to the FAM90 family.</text>
</comment>
<gene>
    <name type="primary">FAM90A10</name>
    <name type="synonym">FAM90A10P</name>
</gene>
<keyword id="KW-1185">Reference proteome</keyword>
<dbReference type="EMBL" id="AC084121">
    <property type="status" value="NOT_ANNOTATED_CDS"/>
    <property type="molecule type" value="Genomic_DNA"/>
</dbReference>
<dbReference type="CCDS" id="CCDS94255.1"/>
<dbReference type="RefSeq" id="NP_001157919.1">
    <property type="nucleotide sequence ID" value="NM_001164447.1"/>
</dbReference>
<dbReference type="STRING" id="9606.ENSP00000497650"/>
<dbReference type="iPTMnet" id="A6NDY2"/>
<dbReference type="PhosphoSitePlus" id="A6NDY2"/>
<dbReference type="BioMuta" id="HGNC:32258"/>
<dbReference type="MassIVE" id="A6NDY2"/>
<dbReference type="Ensembl" id="ENST00000533716.2">
    <property type="protein sequence ID" value="ENSP00000497650.1"/>
    <property type="gene ID" value="ENSG00000285950.1"/>
</dbReference>
<dbReference type="GeneID" id="441328"/>
<dbReference type="MANE-Select" id="ENST00000533716.2">
    <property type="protein sequence ID" value="ENSP00000497650.1"/>
    <property type="RefSeq nucleotide sequence ID" value="NM_001164447.1"/>
    <property type="RefSeq protein sequence ID" value="NP_001157919.1"/>
</dbReference>
<dbReference type="AGR" id="HGNC:32258"/>
<dbReference type="GeneCards" id="FAM90A10"/>
<dbReference type="HGNC" id="HGNC:32258">
    <property type="gene designation" value="FAM90A10"/>
</dbReference>
<dbReference type="HPA" id="ENSG00000285950">
    <property type="expression patterns" value="Not detected"/>
</dbReference>
<dbReference type="MIM" id="613047">
    <property type="type" value="gene"/>
</dbReference>
<dbReference type="neXtProt" id="NX_A6NDY2"/>
<dbReference type="VEuPathDB" id="HostDB:ENSG00000285950"/>
<dbReference type="GeneTree" id="ENSGT00910000144208"/>
<dbReference type="InParanoid" id="A6NDY2"/>
<dbReference type="OMA" id="STTCPMK"/>
<dbReference type="OrthoDB" id="9529927at2759"/>
<dbReference type="PAN-GO" id="A6NDY2">
    <property type="GO annotations" value="0 GO annotations based on evolutionary models"/>
</dbReference>
<dbReference type="PhylomeDB" id="A6NDY2"/>
<dbReference type="PathwayCommons" id="A6NDY2"/>
<dbReference type="Pharos" id="A6NDY2">
    <property type="development level" value="Tdark"/>
</dbReference>
<dbReference type="Proteomes" id="UP000005640">
    <property type="component" value="Chromosome 8"/>
</dbReference>
<dbReference type="RNAct" id="A6NDY2">
    <property type="molecule type" value="protein"/>
</dbReference>
<dbReference type="InterPro" id="IPR039213">
    <property type="entry name" value="FAM90"/>
</dbReference>
<dbReference type="InterPro" id="IPR041670">
    <property type="entry name" value="Znf-CCHC_6"/>
</dbReference>
<dbReference type="PANTHER" id="PTHR16035:SF14">
    <property type="entry name" value="FAMILY WITH SEQUENCE SIMILARITY 90 MEMBER A11, PSEUDOGENE-RELATED"/>
    <property type="match status" value="1"/>
</dbReference>
<dbReference type="PANTHER" id="PTHR16035">
    <property type="entry name" value="PROTEIN FAM90A1"/>
    <property type="match status" value="1"/>
</dbReference>
<dbReference type="Pfam" id="PF15288">
    <property type="entry name" value="zf-CCHC_6"/>
    <property type="match status" value="1"/>
</dbReference>
<proteinExistence type="inferred from homology"/>
<feature type="chain" id="PRO_0000299595" description="Protein FAM90A10">
    <location>
        <begin position="1"/>
        <end position="464"/>
    </location>
</feature>
<feature type="region of interest" description="Disordered" evidence="1">
    <location>
        <begin position="1"/>
        <end position="42"/>
    </location>
</feature>
<feature type="region of interest" description="Disordered" evidence="1">
    <location>
        <begin position="69"/>
        <end position="373"/>
    </location>
</feature>
<feature type="region of interest" description="Disordered" evidence="1">
    <location>
        <begin position="415"/>
        <end position="437"/>
    </location>
</feature>
<feature type="compositionally biased region" description="Basic and acidic residues" evidence="1">
    <location>
        <begin position="74"/>
        <end position="89"/>
    </location>
</feature>
<feature type="compositionally biased region" description="Basic and acidic residues" evidence="1">
    <location>
        <begin position="97"/>
        <end position="114"/>
    </location>
</feature>
<feature type="compositionally biased region" description="Low complexity" evidence="1">
    <location>
        <begin position="180"/>
        <end position="197"/>
    </location>
</feature>